<accession>B2VDE5</accession>
<reference key="1">
    <citation type="journal article" date="2008" name="Environ. Microbiol.">
        <title>The genome of Erwinia tasmaniensis strain Et1/99, a non-pathogenic bacterium in the genus Erwinia.</title>
        <authorList>
            <person name="Kube M."/>
            <person name="Migdoll A.M."/>
            <person name="Mueller I."/>
            <person name="Kuhl H."/>
            <person name="Beck A."/>
            <person name="Reinhardt R."/>
            <person name="Geider K."/>
        </authorList>
    </citation>
    <scope>NUCLEOTIDE SEQUENCE [LARGE SCALE GENOMIC DNA]</scope>
    <source>
        <strain>DSM 17950 / CFBP 7177 / CIP 109463 / NCPPB 4357 / Et1/99</strain>
    </source>
</reference>
<comment type="function">
    <text evidence="1">Required for spatial organization of the terminus region of the chromosome (Ter macrodomain) during the cell cycle. Prevents early segregation of duplicated Ter macrodomains during cell division. Binds specifically to matS, which is a 13 bp signature motif repeated within the Ter macrodomain.</text>
</comment>
<comment type="subunit">
    <text evidence="1">Homodimer.</text>
</comment>
<comment type="subcellular location">
    <subcellularLocation>
        <location evidence="1">Cytoplasm</location>
    </subcellularLocation>
</comment>
<comment type="similarity">
    <text evidence="1">Belongs to the MatP family.</text>
</comment>
<organism>
    <name type="scientific">Erwinia tasmaniensis (strain DSM 17950 / CFBP 7177 / CIP 109463 / NCPPB 4357 / Et1/99)</name>
    <dbReference type="NCBI Taxonomy" id="465817"/>
    <lineage>
        <taxon>Bacteria</taxon>
        <taxon>Pseudomonadati</taxon>
        <taxon>Pseudomonadota</taxon>
        <taxon>Gammaproteobacteria</taxon>
        <taxon>Enterobacterales</taxon>
        <taxon>Erwiniaceae</taxon>
        <taxon>Erwinia</taxon>
    </lineage>
</organism>
<evidence type="ECO:0000255" key="1">
    <source>
        <dbReference type="HAMAP-Rule" id="MF_01073"/>
    </source>
</evidence>
<proteinExistence type="inferred from homology"/>
<feature type="chain" id="PRO_1000136670" description="Macrodomain Ter protein">
    <location>
        <begin position="1"/>
        <end position="150"/>
    </location>
</feature>
<protein>
    <recommendedName>
        <fullName evidence="1">Macrodomain Ter protein</fullName>
    </recommendedName>
</protein>
<name>MATP_ERWT9</name>
<keyword id="KW-0131">Cell cycle</keyword>
<keyword id="KW-0132">Cell division</keyword>
<keyword id="KW-0963">Cytoplasm</keyword>
<keyword id="KW-0238">DNA-binding</keyword>
<keyword id="KW-1185">Reference proteome</keyword>
<gene>
    <name evidence="1" type="primary">matP</name>
    <name type="ordered locus">ETA_21040</name>
</gene>
<sequence length="150" mass="17905">MKYQQLENLESGWKWKYLVKKHREGELITRYIESSAAQVAVDELLLMENRPVDVLQWIDLHINPKLENRMKQTIRARRKRHFNAEHQHTRKKSIDLEYLVWQRLAALAQRRDSTLSETIVQLIEDAERKEQYANQMSSLKHDLQAILGKS</sequence>
<dbReference type="EMBL" id="CU468135">
    <property type="protein sequence ID" value="CAO97150.1"/>
    <property type="molecule type" value="Genomic_DNA"/>
</dbReference>
<dbReference type="RefSeq" id="WP_012441821.1">
    <property type="nucleotide sequence ID" value="NC_010694.1"/>
</dbReference>
<dbReference type="SMR" id="B2VDE5"/>
<dbReference type="STRING" id="465817.ETA_21040"/>
<dbReference type="KEGG" id="eta:ETA_21040"/>
<dbReference type="eggNOG" id="COG3120">
    <property type="taxonomic scope" value="Bacteria"/>
</dbReference>
<dbReference type="HOGENOM" id="CLU_142157_0_0_6"/>
<dbReference type="OrthoDB" id="5814691at2"/>
<dbReference type="Proteomes" id="UP000001726">
    <property type="component" value="Chromosome"/>
</dbReference>
<dbReference type="GO" id="GO:0005737">
    <property type="term" value="C:cytoplasm"/>
    <property type="evidence" value="ECO:0007669"/>
    <property type="project" value="UniProtKB-SubCell"/>
</dbReference>
<dbReference type="GO" id="GO:0043565">
    <property type="term" value="F:sequence-specific DNA binding"/>
    <property type="evidence" value="ECO:0007669"/>
    <property type="project" value="UniProtKB-UniRule"/>
</dbReference>
<dbReference type="GO" id="GO:0051301">
    <property type="term" value="P:cell division"/>
    <property type="evidence" value="ECO:0007669"/>
    <property type="project" value="UniProtKB-UniRule"/>
</dbReference>
<dbReference type="GO" id="GO:0006355">
    <property type="term" value="P:regulation of DNA-templated transcription"/>
    <property type="evidence" value="ECO:0007669"/>
    <property type="project" value="InterPro"/>
</dbReference>
<dbReference type="Gene3D" id="1.20.1270.380">
    <property type="entry name" value="MatP, N-terminal domain"/>
    <property type="match status" value="1"/>
</dbReference>
<dbReference type="Gene3D" id="1.10.1220.10">
    <property type="entry name" value="Met repressor-like"/>
    <property type="match status" value="1"/>
</dbReference>
<dbReference type="HAMAP" id="MF_01073">
    <property type="entry name" value="MatP"/>
    <property type="match status" value="1"/>
</dbReference>
<dbReference type="InterPro" id="IPR013321">
    <property type="entry name" value="Arc_rbn_hlx_hlx"/>
</dbReference>
<dbReference type="InterPro" id="IPR009390">
    <property type="entry name" value="MatP"/>
</dbReference>
<dbReference type="InterPro" id="IPR035375">
    <property type="entry name" value="MatP_C"/>
</dbReference>
<dbReference type="InterPro" id="IPR035087">
    <property type="entry name" value="MatP_N"/>
</dbReference>
<dbReference type="InterPro" id="IPR038339">
    <property type="entry name" value="MatP_N_sf"/>
</dbReference>
<dbReference type="NCBIfam" id="NF003471">
    <property type="entry name" value="PRK05097.1"/>
    <property type="match status" value="1"/>
</dbReference>
<dbReference type="Pfam" id="PF06303">
    <property type="entry name" value="MatP"/>
    <property type="match status" value="1"/>
</dbReference>
<dbReference type="Pfam" id="PF17414">
    <property type="entry name" value="MatP_C"/>
    <property type="match status" value="1"/>
</dbReference>